<gene>
    <name evidence="1" type="primary">plsB</name>
    <name type="ordered locus">Spea_3996</name>
</gene>
<comment type="catalytic activity">
    <reaction evidence="1">
        <text>sn-glycerol 3-phosphate + an acyl-CoA = a 1-acyl-sn-glycero-3-phosphate + CoA</text>
        <dbReference type="Rhea" id="RHEA:15325"/>
        <dbReference type="ChEBI" id="CHEBI:57287"/>
        <dbReference type="ChEBI" id="CHEBI:57597"/>
        <dbReference type="ChEBI" id="CHEBI:57970"/>
        <dbReference type="ChEBI" id="CHEBI:58342"/>
        <dbReference type="EC" id="2.3.1.15"/>
    </reaction>
</comment>
<comment type="pathway">
    <text evidence="1">Phospholipid metabolism; CDP-diacylglycerol biosynthesis; CDP-diacylglycerol from sn-glycerol 3-phosphate: step 1/3.</text>
</comment>
<comment type="subcellular location">
    <subcellularLocation>
        <location evidence="1">Cell inner membrane</location>
        <topology evidence="1">Peripheral membrane protein</topology>
        <orientation evidence="1">Cytoplasmic side</orientation>
    </subcellularLocation>
</comment>
<comment type="domain">
    <text evidence="1">The HXXXXD motif is essential for acyltransferase activity and may constitute the binding site for the phosphate moiety of the glycerol-3-phosphate.</text>
</comment>
<comment type="similarity">
    <text evidence="1">Belongs to the GPAT/DAPAT family.</text>
</comment>
<proteinExistence type="inferred from homology"/>
<dbReference type="EC" id="2.3.1.15" evidence="1"/>
<dbReference type="EMBL" id="CP000851">
    <property type="protein sequence ID" value="ABV89306.1"/>
    <property type="molecule type" value="Genomic_DNA"/>
</dbReference>
<dbReference type="RefSeq" id="WP_012157186.1">
    <property type="nucleotide sequence ID" value="NC_009901.1"/>
</dbReference>
<dbReference type="SMR" id="A8H9R9"/>
<dbReference type="STRING" id="398579.Spea_3996"/>
<dbReference type="KEGG" id="spl:Spea_3996"/>
<dbReference type="eggNOG" id="COG2937">
    <property type="taxonomic scope" value="Bacteria"/>
</dbReference>
<dbReference type="HOGENOM" id="CLU_015407_0_0_6"/>
<dbReference type="OrthoDB" id="335193at2"/>
<dbReference type="UniPathway" id="UPA00557">
    <property type="reaction ID" value="UER00612"/>
</dbReference>
<dbReference type="Proteomes" id="UP000002608">
    <property type="component" value="Chromosome"/>
</dbReference>
<dbReference type="GO" id="GO:0005886">
    <property type="term" value="C:plasma membrane"/>
    <property type="evidence" value="ECO:0007669"/>
    <property type="project" value="UniProtKB-SubCell"/>
</dbReference>
<dbReference type="GO" id="GO:0004366">
    <property type="term" value="F:glycerol-3-phosphate O-acyltransferase activity"/>
    <property type="evidence" value="ECO:0007669"/>
    <property type="project" value="UniProtKB-UniRule"/>
</dbReference>
<dbReference type="GO" id="GO:0016024">
    <property type="term" value="P:CDP-diacylglycerol biosynthetic process"/>
    <property type="evidence" value="ECO:0007669"/>
    <property type="project" value="UniProtKB-UniRule"/>
</dbReference>
<dbReference type="GO" id="GO:0006631">
    <property type="term" value="P:fatty acid metabolic process"/>
    <property type="evidence" value="ECO:0007669"/>
    <property type="project" value="TreeGrafter"/>
</dbReference>
<dbReference type="CDD" id="cd07993">
    <property type="entry name" value="LPLAT_DHAPAT-like"/>
    <property type="match status" value="1"/>
</dbReference>
<dbReference type="HAMAP" id="MF_00393">
    <property type="entry name" value="Glyc3P_acyltrans"/>
    <property type="match status" value="1"/>
</dbReference>
<dbReference type="InterPro" id="IPR022284">
    <property type="entry name" value="GPAT/DHAPAT"/>
</dbReference>
<dbReference type="InterPro" id="IPR045520">
    <property type="entry name" value="GPAT/DHAPAT_C"/>
</dbReference>
<dbReference type="InterPro" id="IPR041728">
    <property type="entry name" value="GPAT/DHAPAT_LPLAT"/>
</dbReference>
<dbReference type="InterPro" id="IPR028354">
    <property type="entry name" value="GPAT_PlsB"/>
</dbReference>
<dbReference type="InterPro" id="IPR002123">
    <property type="entry name" value="Plipid/glycerol_acylTrfase"/>
</dbReference>
<dbReference type="NCBIfam" id="TIGR03703">
    <property type="entry name" value="plsB"/>
    <property type="match status" value="1"/>
</dbReference>
<dbReference type="NCBIfam" id="NF003441">
    <property type="entry name" value="PRK04974.1"/>
    <property type="match status" value="1"/>
</dbReference>
<dbReference type="PANTHER" id="PTHR12563:SF17">
    <property type="entry name" value="DIHYDROXYACETONE PHOSPHATE ACYLTRANSFERASE"/>
    <property type="match status" value="1"/>
</dbReference>
<dbReference type="PANTHER" id="PTHR12563">
    <property type="entry name" value="GLYCEROL-3-PHOSPHATE ACYLTRANSFERASE"/>
    <property type="match status" value="1"/>
</dbReference>
<dbReference type="Pfam" id="PF01553">
    <property type="entry name" value="Acyltransferase"/>
    <property type="match status" value="1"/>
</dbReference>
<dbReference type="Pfam" id="PF19277">
    <property type="entry name" value="GPAT_C"/>
    <property type="match status" value="1"/>
</dbReference>
<dbReference type="PIRSF" id="PIRSF500064">
    <property type="entry name" value="GPAT"/>
    <property type="match status" value="1"/>
</dbReference>
<dbReference type="PIRSF" id="PIRSF000437">
    <property type="entry name" value="GPAT_DHAPAT"/>
    <property type="match status" value="1"/>
</dbReference>
<dbReference type="SMART" id="SM00563">
    <property type="entry name" value="PlsC"/>
    <property type="match status" value="1"/>
</dbReference>
<dbReference type="SUPFAM" id="SSF69593">
    <property type="entry name" value="Glycerol-3-phosphate (1)-acyltransferase"/>
    <property type="match status" value="1"/>
</dbReference>
<feature type="chain" id="PRO_1000080293" description="Glycerol-3-phosphate acyltransferase">
    <location>
        <begin position="1"/>
        <end position="807"/>
    </location>
</feature>
<feature type="short sequence motif" description="HXXXXD motif">
    <location>
        <begin position="308"/>
        <end position="313"/>
    </location>
</feature>
<keyword id="KW-0012">Acyltransferase</keyword>
<keyword id="KW-0997">Cell inner membrane</keyword>
<keyword id="KW-1003">Cell membrane</keyword>
<keyword id="KW-0444">Lipid biosynthesis</keyword>
<keyword id="KW-0443">Lipid metabolism</keyword>
<keyword id="KW-0472">Membrane</keyword>
<keyword id="KW-0594">Phospholipid biosynthesis</keyword>
<keyword id="KW-1208">Phospholipid metabolism</keyword>
<keyword id="KW-1185">Reference proteome</keyword>
<keyword id="KW-0808">Transferase</keyword>
<organism>
    <name type="scientific">Shewanella pealeana (strain ATCC 700345 / ANG-SQ1)</name>
    <dbReference type="NCBI Taxonomy" id="398579"/>
    <lineage>
        <taxon>Bacteria</taxon>
        <taxon>Pseudomonadati</taxon>
        <taxon>Pseudomonadota</taxon>
        <taxon>Gammaproteobacteria</taxon>
        <taxon>Alteromonadales</taxon>
        <taxon>Shewanellaceae</taxon>
        <taxon>Shewanella</taxon>
    </lineage>
</organism>
<evidence type="ECO:0000255" key="1">
    <source>
        <dbReference type="HAMAP-Rule" id="MF_00393"/>
    </source>
</evidence>
<protein>
    <recommendedName>
        <fullName evidence="1">Glycerol-3-phosphate acyltransferase</fullName>
        <shortName evidence="1">GPAT</shortName>
        <ecNumber evidence="1">2.3.1.15</ecNumber>
    </recommendedName>
</protein>
<sequence>MSKQDSLWFKSLRWLQRQLVHTVVVPHDPFDDLNLDPSKPLAYVMKTESVSDIAALSEMTAKLGLPSPYEELEVNGVKAPRVVCLEGSKPLFGQREGGEQYIDCFKRLLSVHKQNRELDIQLVPVSLYWGRTPGKEDDTMRAAVLERQNPTWLRKCLMILFLGRHNFVQFSNAVSLRYMADEHGTDKRIAQKLARVARVHFQRQRKVMTGPQLPKRQALFHALLKSDSITKAIKEEAASKKITEAEARAKAMEYLDEVAADYSDSLVRIAERFLTWLWNKLYKGINIKGAEQVRQLHHDGHEIVYVPCHRSHMDYLLLSYILYYQGMVPPHIAAGINLNFWPAGPAFRRGGAFFIRRSFGGNKLYTAVFREYLDQLFTKGYSVEYFTEGGRSRTGRLLAPKTGMLAMTLNSVLRGVERPVTLVPVYLGYDHVMEVATYHKELSGKKKKKESVWQVFGAIRKLGNFGQGYVNFGEPITLHNFLNEQAPSWREDIAKDPDQKPSWLTPVVNTLANRVMTNINDAAAVSSVTLTSMVLLASEQNALERSQLEKQLDLYLTILKEQPYTEYTSVPEGTGHDLVSQGLELKKLQIESDPLGDIISIDQSIAITMTYYRNNIIHLMVLPSLIAACLLRKENCSREDVICVVNDFYPLLEAELFMGIDDPAQYASQILDIFVAQGLVVEAEHFEVVESKINQLLLLSGTISETMQRYAILFNLLEVKPNMERSELEKDSHRLAQRLGALHGITAPEFYDKKLYATLSVKLKELGYLADNQGCSDIKRIKERANLLLRSSVRQTIVDSVHAEQNT</sequence>
<accession>A8H9R9</accession>
<name>PLSB_SHEPA</name>
<reference key="1">
    <citation type="submission" date="2007-10" db="EMBL/GenBank/DDBJ databases">
        <title>Complete sequence of Shewanella pealeana ATCC 700345.</title>
        <authorList>
            <consortium name="US DOE Joint Genome Institute"/>
            <person name="Copeland A."/>
            <person name="Lucas S."/>
            <person name="Lapidus A."/>
            <person name="Barry K."/>
            <person name="Glavina del Rio T."/>
            <person name="Dalin E."/>
            <person name="Tice H."/>
            <person name="Pitluck S."/>
            <person name="Chertkov O."/>
            <person name="Brettin T."/>
            <person name="Bruce D."/>
            <person name="Detter J.C."/>
            <person name="Han C."/>
            <person name="Schmutz J."/>
            <person name="Larimer F."/>
            <person name="Land M."/>
            <person name="Hauser L."/>
            <person name="Kyrpides N."/>
            <person name="Kim E."/>
            <person name="Zhao J.-S.Z."/>
            <person name="Manno D."/>
            <person name="Hawari J."/>
            <person name="Richardson P."/>
        </authorList>
    </citation>
    <scope>NUCLEOTIDE SEQUENCE [LARGE SCALE GENOMIC DNA]</scope>
    <source>
        <strain>ATCC 700345 / ANG-SQ1</strain>
    </source>
</reference>